<name>MARE2_PONAB</name>
<reference key="1">
    <citation type="submission" date="2004-11" db="EMBL/GenBank/DDBJ databases">
        <authorList>
            <consortium name="The German cDNA consortium"/>
        </authorList>
    </citation>
    <scope>NUCLEOTIDE SEQUENCE [LARGE SCALE MRNA]</scope>
    <source>
        <tissue>Brain cortex</tissue>
    </source>
</reference>
<comment type="function">
    <text evidence="1">May be involved in microtubule polymerization, and spindle function by stabilizing microtubules and anchoring them at centrosomes. May play a role in cell migration (By similarity).</text>
</comment>
<comment type="subunit">
    <text evidence="2">Interacts with DCTN1. Interacts with APC (via C-terminal). Interacts with monomeric and polymerized tubulin. Interacts with SLAIN1. Interacts (via the N-terminal region) with BAG1 (By similarity).</text>
</comment>
<comment type="subcellular location">
    <subcellularLocation>
        <location evidence="1">Cytoplasm</location>
    </subcellularLocation>
    <subcellularLocation>
        <location evidence="1">Cytoplasm</location>
        <location evidence="1">Cytoskeleton</location>
    </subcellularLocation>
    <text evidence="1">Associated with the microtubule network. Accumulates at the plus end of microtubules (By similarity).</text>
</comment>
<comment type="domain">
    <text evidence="1">Composed of two functionally independent domains. The N-terminal domain forms a hydrophobic cleft involved in microtubule binding and the C-terminal is involved in the formation of mutually exclusive complexes with APC and DCTN1 (By similarity).</text>
</comment>
<comment type="similarity">
    <text evidence="6">Belongs to the MAPRE family.</text>
</comment>
<keyword id="KW-0131">Cell cycle</keyword>
<keyword id="KW-0132">Cell division</keyword>
<keyword id="KW-0963">Cytoplasm</keyword>
<keyword id="KW-0206">Cytoskeleton</keyword>
<keyword id="KW-0493">Microtubule</keyword>
<keyword id="KW-0498">Mitosis</keyword>
<keyword id="KW-0597">Phosphoprotein</keyword>
<keyword id="KW-1185">Reference proteome</keyword>
<dbReference type="EMBL" id="CR861262">
    <property type="protein sequence ID" value="CAH93330.1"/>
    <property type="molecule type" value="mRNA"/>
</dbReference>
<dbReference type="RefSeq" id="NP_001126960.1">
    <property type="nucleotide sequence ID" value="NM_001133488.1"/>
</dbReference>
<dbReference type="SMR" id="Q5R4I6"/>
<dbReference type="FunCoup" id="Q5R4I6">
    <property type="interactions" value="528"/>
</dbReference>
<dbReference type="STRING" id="9601.ENSPPYP00000010220"/>
<dbReference type="Ensembl" id="ENSPPYT00000010624.3">
    <property type="protein sequence ID" value="ENSPPYP00000010220.2"/>
    <property type="gene ID" value="ENSPPYG00000009101.3"/>
</dbReference>
<dbReference type="GeneID" id="100173979"/>
<dbReference type="KEGG" id="pon:100173979"/>
<dbReference type="CTD" id="10982"/>
<dbReference type="eggNOG" id="KOG3000">
    <property type="taxonomic scope" value="Eukaryota"/>
</dbReference>
<dbReference type="GeneTree" id="ENSGT00490000043329"/>
<dbReference type="HOGENOM" id="CLU_041744_1_0_1"/>
<dbReference type="InParanoid" id="Q5R4I6"/>
<dbReference type="OMA" id="WIKRFWD"/>
<dbReference type="OrthoDB" id="2119228at2759"/>
<dbReference type="TreeFam" id="TF313620"/>
<dbReference type="Proteomes" id="UP000001595">
    <property type="component" value="Chromosome 18"/>
</dbReference>
<dbReference type="GO" id="GO:0005737">
    <property type="term" value="C:cytoplasm"/>
    <property type="evidence" value="ECO:0007669"/>
    <property type="project" value="UniProtKB-SubCell"/>
</dbReference>
<dbReference type="GO" id="GO:0005925">
    <property type="term" value="C:focal adhesion"/>
    <property type="evidence" value="ECO:0007669"/>
    <property type="project" value="Ensembl"/>
</dbReference>
<dbReference type="GO" id="GO:0005874">
    <property type="term" value="C:microtubule"/>
    <property type="evidence" value="ECO:0007669"/>
    <property type="project" value="UniProtKB-KW"/>
</dbReference>
<dbReference type="GO" id="GO:0042802">
    <property type="term" value="F:identical protein binding"/>
    <property type="evidence" value="ECO:0007669"/>
    <property type="project" value="Ensembl"/>
</dbReference>
<dbReference type="GO" id="GO:0051010">
    <property type="term" value="F:microtubule plus-end binding"/>
    <property type="evidence" value="ECO:0007669"/>
    <property type="project" value="Ensembl"/>
</dbReference>
<dbReference type="GO" id="GO:0019901">
    <property type="term" value="F:protein kinase binding"/>
    <property type="evidence" value="ECO:0007669"/>
    <property type="project" value="Ensembl"/>
</dbReference>
<dbReference type="GO" id="GO:0051301">
    <property type="term" value="P:cell division"/>
    <property type="evidence" value="ECO:0007669"/>
    <property type="project" value="UniProtKB-KW"/>
</dbReference>
<dbReference type="GO" id="GO:0032014">
    <property type="term" value="P:positive regulation of ARF protein signal transduction"/>
    <property type="evidence" value="ECO:0007669"/>
    <property type="project" value="Ensembl"/>
</dbReference>
<dbReference type="GO" id="GO:0120183">
    <property type="term" value="P:positive regulation of focal adhesion disassembly"/>
    <property type="evidence" value="ECO:0007669"/>
    <property type="project" value="Ensembl"/>
</dbReference>
<dbReference type="GO" id="GO:0051549">
    <property type="term" value="P:positive regulation of keratinocyte migration"/>
    <property type="evidence" value="ECO:0007669"/>
    <property type="project" value="Ensembl"/>
</dbReference>
<dbReference type="FunFam" id="1.20.5.1430:FF:000002">
    <property type="entry name" value="microtubule-associated protein RP/EB family member 2 isoform X1"/>
    <property type="match status" value="1"/>
</dbReference>
<dbReference type="FunFam" id="1.10.418.10:FF:000007">
    <property type="entry name" value="Microtubule-associated protein, RP/EB family, member 2"/>
    <property type="match status" value="1"/>
</dbReference>
<dbReference type="Gene3D" id="1.20.5.1430">
    <property type="match status" value="1"/>
</dbReference>
<dbReference type="Gene3D" id="1.10.418.10">
    <property type="entry name" value="Calponin-like domain"/>
    <property type="match status" value="1"/>
</dbReference>
<dbReference type="InterPro" id="IPR001715">
    <property type="entry name" value="CH_dom"/>
</dbReference>
<dbReference type="InterPro" id="IPR036872">
    <property type="entry name" value="CH_dom_sf"/>
</dbReference>
<dbReference type="InterPro" id="IPR004953">
    <property type="entry name" value="EB1_C"/>
</dbReference>
<dbReference type="InterPro" id="IPR036133">
    <property type="entry name" value="EB1_C_sf"/>
</dbReference>
<dbReference type="InterPro" id="IPR027328">
    <property type="entry name" value="MAPRE"/>
</dbReference>
<dbReference type="PANTHER" id="PTHR10623">
    <property type="entry name" value="MICROTUBULE-ASSOCIATED PROTEIN RP/EB FAMILY MEMBER"/>
    <property type="match status" value="1"/>
</dbReference>
<dbReference type="Pfam" id="PF00307">
    <property type="entry name" value="CH"/>
    <property type="match status" value="1"/>
</dbReference>
<dbReference type="Pfam" id="PF03271">
    <property type="entry name" value="EB1"/>
    <property type="match status" value="1"/>
</dbReference>
<dbReference type="SUPFAM" id="SSF47576">
    <property type="entry name" value="Calponin-homology domain, CH-domain"/>
    <property type="match status" value="1"/>
</dbReference>
<dbReference type="SUPFAM" id="SSF140612">
    <property type="entry name" value="EB1 dimerisation domain-like"/>
    <property type="match status" value="1"/>
</dbReference>
<dbReference type="PROSITE" id="PS50021">
    <property type="entry name" value="CH"/>
    <property type="match status" value="1"/>
</dbReference>
<dbReference type="PROSITE" id="PS51230">
    <property type="entry name" value="EB1_C"/>
    <property type="match status" value="1"/>
</dbReference>
<sequence length="327" mass="37045">MPGPTQTLSPNGENNNDIIQDNNGTIIPFRKHTVRGERSYSWGMAVNVYSTSITQETMSRHDIIAWVNDIVSLNYTKVEQLCSGAAYCQFMDMLFPGCISLKKVKFQAKLEHEYIHNFKLLQASFKRMNVDKVIPVEKLVKGRFQDNLDFIQWFKKFYDANYDGKEYDPVEARQGQDAIPPPDPGEQIFNLPKKSHHANSPTAGAAKSSPAAKPGSTPSRPSSAKRASSSGSASRSDKDLETQVIQLNEQVHSLKLALEGVEKERDFYFGKLREIELLCQEHGQENDDLVQRLMDVLYASEEHEGHTEEPEAEEQAHEQQPPQQEEY</sequence>
<protein>
    <recommendedName>
        <fullName>Microtubule-associated protein RP/EB family member 2</fullName>
    </recommendedName>
</protein>
<proteinExistence type="evidence at transcript level"/>
<organism>
    <name type="scientific">Pongo abelii</name>
    <name type="common">Sumatran orangutan</name>
    <name type="synonym">Pongo pygmaeus abelii</name>
    <dbReference type="NCBI Taxonomy" id="9601"/>
    <lineage>
        <taxon>Eukaryota</taxon>
        <taxon>Metazoa</taxon>
        <taxon>Chordata</taxon>
        <taxon>Craniata</taxon>
        <taxon>Vertebrata</taxon>
        <taxon>Euteleostomi</taxon>
        <taxon>Mammalia</taxon>
        <taxon>Eutheria</taxon>
        <taxon>Euarchontoglires</taxon>
        <taxon>Primates</taxon>
        <taxon>Haplorrhini</taxon>
        <taxon>Catarrhini</taxon>
        <taxon>Hominidae</taxon>
        <taxon>Pongo</taxon>
    </lineage>
</organism>
<accession>Q5R4I6</accession>
<evidence type="ECO:0000250" key="1"/>
<evidence type="ECO:0000250" key="2">
    <source>
        <dbReference type="UniProtKB" id="Q15555"/>
    </source>
</evidence>
<evidence type="ECO:0000255" key="3">
    <source>
        <dbReference type="PROSITE-ProRule" id="PRU00044"/>
    </source>
</evidence>
<evidence type="ECO:0000255" key="4">
    <source>
        <dbReference type="PROSITE-ProRule" id="PRU00576"/>
    </source>
</evidence>
<evidence type="ECO:0000256" key="5">
    <source>
        <dbReference type="SAM" id="MobiDB-lite"/>
    </source>
</evidence>
<evidence type="ECO:0000305" key="6"/>
<gene>
    <name type="primary">MAPRE2</name>
</gene>
<feature type="chain" id="PRO_0000240311" description="Microtubule-associated protein RP/EB family member 2">
    <location>
        <begin position="1"/>
        <end position="327"/>
    </location>
</feature>
<feature type="domain" description="Calponin-homology (CH)" evidence="3">
    <location>
        <begin position="57"/>
        <end position="159"/>
    </location>
</feature>
<feature type="domain" description="EB1 C-terminal" evidence="4">
    <location>
        <begin position="236"/>
        <end position="306"/>
    </location>
</feature>
<feature type="region of interest" description="Disordered" evidence="5">
    <location>
        <begin position="1"/>
        <end position="21"/>
    </location>
</feature>
<feature type="region of interest" description="Disordered" evidence="5">
    <location>
        <begin position="171"/>
        <end position="240"/>
    </location>
</feature>
<feature type="region of interest" description="DCTN1-binding" evidence="1">
    <location>
        <begin position="187"/>
        <end position="327"/>
    </location>
</feature>
<feature type="region of interest" description="APC-binding" evidence="1">
    <location>
        <begin position="259"/>
        <end position="302"/>
    </location>
</feature>
<feature type="region of interest" description="Disordered" evidence="5">
    <location>
        <begin position="299"/>
        <end position="327"/>
    </location>
</feature>
<feature type="compositionally biased region" description="Low complexity" evidence="5">
    <location>
        <begin position="200"/>
        <end position="234"/>
    </location>
</feature>
<feature type="compositionally biased region" description="Basic and acidic residues" evidence="5">
    <location>
        <begin position="300"/>
        <end position="317"/>
    </location>
</feature>
<feature type="compositionally biased region" description="Low complexity" evidence="5">
    <location>
        <begin position="318"/>
        <end position="327"/>
    </location>
</feature>
<feature type="modified residue" description="Phosphoserine" evidence="2">
    <location>
        <position position="9"/>
    </location>
</feature>
<feature type="modified residue" description="Phosphotyrosine" evidence="2">
    <location>
        <position position="167"/>
    </location>
</feature>
<feature type="modified residue" description="Phosphoserine" evidence="2">
    <location>
        <position position="219"/>
    </location>
</feature>